<accession>Q9NQ84</accession>
<accession>B5BUN4</accession>
<accession>Q2NL85</accession>
<accession>Q9NZG5</accession>
<name>GPC5C_HUMAN</name>
<reference key="1">
    <citation type="journal article" date="2000" name="Genomics">
        <title>Molecular cloning and characterization of two novel retinoic acid-inducible orphan G-protein-coupled receptors (GPRC5B and GPRC5C).</title>
        <authorList>
            <person name="Robbins M.J."/>
            <person name="Michalovich D."/>
            <person name="Hill J."/>
            <person name="Calver A.R."/>
            <person name="Medhurst A.D."/>
            <person name="Gloger I."/>
            <person name="Sims M.A."/>
            <person name="Middlemiss D.N."/>
            <person name="Pangalos M.N."/>
        </authorList>
    </citation>
    <scope>NUCLEOTIDE SEQUENCE [MRNA] (ISOFORM 2)</scope>
    <scope>TISSUE SPECIFICITY</scope>
    <scope>SUBCELLULAR LOCATION</scope>
    <scope>INDUCTION</scope>
</reference>
<reference key="2">
    <citation type="journal article" date="2001" name="Biochim. Biophys. Acta">
        <title>Cloning and characterization of a human orphan family C G-protein coupled receptor GPRC5D.</title>
        <authorList>
            <person name="Braeuner-Osborne H."/>
            <person name="Jensen A.A."/>
            <person name="Sheppard P.O."/>
            <person name="Brodin B."/>
            <person name="Krogsgaard-Larsen P."/>
            <person name="O'Hara P."/>
        </authorList>
    </citation>
    <scope>NUCLEOTIDE SEQUENCE [MRNA] (ISOFORM 1)</scope>
    <scope>TISSUE SPECIFICITY</scope>
    <scope>SUBCELLULAR LOCATION</scope>
    <scope>INDUCTION</scope>
</reference>
<reference key="3">
    <citation type="submission" date="2003-05" db="EMBL/GenBank/DDBJ databases">
        <title>Cloning of human full-length CDSs in BD Creator(TM) system donor vector.</title>
        <authorList>
            <person name="Kalnine N."/>
            <person name="Chen X."/>
            <person name="Rolfs A."/>
            <person name="Halleck A."/>
            <person name="Hines L."/>
            <person name="Eisenstein S."/>
            <person name="Koundinya M."/>
            <person name="Raphael J."/>
            <person name="Moreira D."/>
            <person name="Kelley T."/>
            <person name="LaBaer J."/>
            <person name="Lin Y."/>
            <person name="Phelan M."/>
            <person name="Farmer A."/>
        </authorList>
    </citation>
    <scope>NUCLEOTIDE SEQUENCE [LARGE SCALE MRNA] (ISOFORM 1)</scope>
</reference>
<reference key="4">
    <citation type="journal article" date="2004" name="Nat. Genet.">
        <title>Complete sequencing and characterization of 21,243 full-length human cDNAs.</title>
        <authorList>
            <person name="Ota T."/>
            <person name="Suzuki Y."/>
            <person name="Nishikawa T."/>
            <person name="Otsuki T."/>
            <person name="Sugiyama T."/>
            <person name="Irie R."/>
            <person name="Wakamatsu A."/>
            <person name="Hayashi K."/>
            <person name="Sato H."/>
            <person name="Nagai K."/>
            <person name="Kimura K."/>
            <person name="Makita H."/>
            <person name="Sekine M."/>
            <person name="Obayashi M."/>
            <person name="Nishi T."/>
            <person name="Shibahara T."/>
            <person name="Tanaka T."/>
            <person name="Ishii S."/>
            <person name="Yamamoto J."/>
            <person name="Saito K."/>
            <person name="Kawai Y."/>
            <person name="Isono Y."/>
            <person name="Nakamura Y."/>
            <person name="Nagahari K."/>
            <person name="Murakami K."/>
            <person name="Yasuda T."/>
            <person name="Iwayanagi T."/>
            <person name="Wagatsuma M."/>
            <person name="Shiratori A."/>
            <person name="Sudo H."/>
            <person name="Hosoiri T."/>
            <person name="Kaku Y."/>
            <person name="Kodaira H."/>
            <person name="Kondo H."/>
            <person name="Sugawara M."/>
            <person name="Takahashi M."/>
            <person name="Kanda K."/>
            <person name="Yokoi T."/>
            <person name="Furuya T."/>
            <person name="Kikkawa E."/>
            <person name="Omura Y."/>
            <person name="Abe K."/>
            <person name="Kamihara K."/>
            <person name="Katsuta N."/>
            <person name="Sato K."/>
            <person name="Tanikawa M."/>
            <person name="Yamazaki M."/>
            <person name="Ninomiya K."/>
            <person name="Ishibashi T."/>
            <person name="Yamashita H."/>
            <person name="Murakawa K."/>
            <person name="Fujimori K."/>
            <person name="Tanai H."/>
            <person name="Kimata M."/>
            <person name="Watanabe M."/>
            <person name="Hiraoka S."/>
            <person name="Chiba Y."/>
            <person name="Ishida S."/>
            <person name="Ono Y."/>
            <person name="Takiguchi S."/>
            <person name="Watanabe S."/>
            <person name="Yosida M."/>
            <person name="Hotuta T."/>
            <person name="Kusano J."/>
            <person name="Kanehori K."/>
            <person name="Takahashi-Fujii A."/>
            <person name="Hara H."/>
            <person name="Tanase T.-O."/>
            <person name="Nomura Y."/>
            <person name="Togiya S."/>
            <person name="Komai F."/>
            <person name="Hara R."/>
            <person name="Takeuchi K."/>
            <person name="Arita M."/>
            <person name="Imose N."/>
            <person name="Musashino K."/>
            <person name="Yuuki H."/>
            <person name="Oshima A."/>
            <person name="Sasaki N."/>
            <person name="Aotsuka S."/>
            <person name="Yoshikawa Y."/>
            <person name="Matsunawa H."/>
            <person name="Ichihara T."/>
            <person name="Shiohata N."/>
            <person name="Sano S."/>
            <person name="Moriya S."/>
            <person name="Momiyama H."/>
            <person name="Satoh N."/>
            <person name="Takami S."/>
            <person name="Terashima Y."/>
            <person name="Suzuki O."/>
            <person name="Nakagawa S."/>
            <person name="Senoh A."/>
            <person name="Mizoguchi H."/>
            <person name="Goto Y."/>
            <person name="Shimizu F."/>
            <person name="Wakebe H."/>
            <person name="Hishigaki H."/>
            <person name="Watanabe T."/>
            <person name="Sugiyama A."/>
            <person name="Takemoto M."/>
            <person name="Kawakami B."/>
            <person name="Yamazaki M."/>
            <person name="Watanabe K."/>
            <person name="Kumagai A."/>
            <person name="Itakura S."/>
            <person name="Fukuzumi Y."/>
            <person name="Fujimori Y."/>
            <person name="Komiyama M."/>
            <person name="Tashiro H."/>
            <person name="Tanigami A."/>
            <person name="Fujiwara T."/>
            <person name="Ono T."/>
            <person name="Yamada K."/>
            <person name="Fujii Y."/>
            <person name="Ozaki K."/>
            <person name="Hirao M."/>
            <person name="Ohmori Y."/>
            <person name="Kawabata A."/>
            <person name="Hikiji T."/>
            <person name="Kobatake N."/>
            <person name="Inagaki H."/>
            <person name="Ikema Y."/>
            <person name="Okamoto S."/>
            <person name="Okitani R."/>
            <person name="Kawakami T."/>
            <person name="Noguchi S."/>
            <person name="Itoh T."/>
            <person name="Shigeta K."/>
            <person name="Senba T."/>
            <person name="Matsumura K."/>
            <person name="Nakajima Y."/>
            <person name="Mizuno T."/>
            <person name="Morinaga M."/>
            <person name="Sasaki M."/>
            <person name="Togashi T."/>
            <person name="Oyama M."/>
            <person name="Hata H."/>
            <person name="Watanabe M."/>
            <person name="Komatsu T."/>
            <person name="Mizushima-Sugano J."/>
            <person name="Satoh T."/>
            <person name="Shirai Y."/>
            <person name="Takahashi Y."/>
            <person name="Nakagawa K."/>
            <person name="Okumura K."/>
            <person name="Nagase T."/>
            <person name="Nomura N."/>
            <person name="Kikuchi H."/>
            <person name="Masuho Y."/>
            <person name="Yamashita R."/>
            <person name="Nakai K."/>
            <person name="Yada T."/>
            <person name="Nakamura Y."/>
            <person name="Ohara O."/>
            <person name="Isogai T."/>
            <person name="Sugano S."/>
        </authorList>
    </citation>
    <scope>NUCLEOTIDE SEQUENCE [LARGE SCALE MRNA] (ISOFORM 1)</scope>
</reference>
<reference key="5">
    <citation type="journal article" date="2005" name="DNA Res.">
        <title>Signal sequence and keyword trap in silico for selection of full-length human cDNAs encoding secretion or membrane proteins from oligo-capped cDNA libraries.</title>
        <authorList>
            <person name="Otsuki T."/>
            <person name="Ota T."/>
            <person name="Nishikawa T."/>
            <person name="Hayashi K."/>
            <person name="Suzuki Y."/>
            <person name="Yamamoto J."/>
            <person name="Wakamatsu A."/>
            <person name="Kimura K."/>
            <person name="Sakamoto K."/>
            <person name="Hatano N."/>
            <person name="Kawai Y."/>
            <person name="Ishii S."/>
            <person name="Saito K."/>
            <person name="Kojima S."/>
            <person name="Sugiyama T."/>
            <person name="Ono T."/>
            <person name="Okano K."/>
            <person name="Yoshikawa Y."/>
            <person name="Aotsuka S."/>
            <person name="Sasaki N."/>
            <person name="Hattori A."/>
            <person name="Okumura K."/>
            <person name="Nagai K."/>
            <person name="Sugano S."/>
            <person name="Isogai T."/>
        </authorList>
    </citation>
    <scope>NUCLEOTIDE SEQUENCE [LARGE SCALE MRNA] (ISOFORM 1)</scope>
    <source>
        <tissue>Placenta</tissue>
    </source>
</reference>
<reference key="6">
    <citation type="journal article" date="2008" name="Nat. Methods">
        <title>Human protein factory for converting the transcriptome into an in vitro-expressed proteome.</title>
        <authorList>
            <person name="Goshima N."/>
            <person name="Kawamura Y."/>
            <person name="Fukumoto A."/>
            <person name="Miura A."/>
            <person name="Honma R."/>
            <person name="Satoh R."/>
            <person name="Wakamatsu A."/>
            <person name="Yamamoto J."/>
            <person name="Kimura K."/>
            <person name="Nishikawa T."/>
            <person name="Andoh T."/>
            <person name="Iida Y."/>
            <person name="Ishikawa K."/>
            <person name="Ito E."/>
            <person name="Kagawa N."/>
            <person name="Kaminaga C."/>
            <person name="Kanehori K."/>
            <person name="Kawakami B."/>
            <person name="Kenmochi K."/>
            <person name="Kimura R."/>
            <person name="Kobayashi M."/>
            <person name="Kuroita T."/>
            <person name="Kuwayama H."/>
            <person name="Maruyama Y."/>
            <person name="Matsuo K."/>
            <person name="Minami K."/>
            <person name="Mitsubori M."/>
            <person name="Mori M."/>
            <person name="Morishita R."/>
            <person name="Murase A."/>
            <person name="Nishikawa A."/>
            <person name="Nishikawa S."/>
            <person name="Okamoto T."/>
            <person name="Sakagami N."/>
            <person name="Sakamoto Y."/>
            <person name="Sasaki Y."/>
            <person name="Seki T."/>
            <person name="Sono S."/>
            <person name="Sugiyama A."/>
            <person name="Sumiya T."/>
            <person name="Takayama T."/>
            <person name="Takayama Y."/>
            <person name="Takeda H."/>
            <person name="Togashi T."/>
            <person name="Yahata K."/>
            <person name="Yamada H."/>
            <person name="Yanagisawa Y."/>
            <person name="Endo Y."/>
            <person name="Imamoto F."/>
            <person name="Kisu Y."/>
            <person name="Tanaka S."/>
            <person name="Isogai T."/>
            <person name="Imai J."/>
            <person name="Watanabe S."/>
            <person name="Nomura N."/>
        </authorList>
    </citation>
    <scope>NUCLEOTIDE SEQUENCE [LARGE SCALE MRNA] (ISOFORM 2)</scope>
</reference>
<reference key="7">
    <citation type="journal article" date="2006" name="Nature">
        <title>DNA sequence of human chromosome 17 and analysis of rearrangement in the human lineage.</title>
        <authorList>
            <person name="Zody M.C."/>
            <person name="Garber M."/>
            <person name="Adams D.J."/>
            <person name="Sharpe T."/>
            <person name="Harrow J."/>
            <person name="Lupski J.R."/>
            <person name="Nicholson C."/>
            <person name="Searle S.M."/>
            <person name="Wilming L."/>
            <person name="Young S.K."/>
            <person name="Abouelleil A."/>
            <person name="Allen N.R."/>
            <person name="Bi W."/>
            <person name="Bloom T."/>
            <person name="Borowsky M.L."/>
            <person name="Bugalter B.E."/>
            <person name="Butler J."/>
            <person name="Chang J.L."/>
            <person name="Chen C.-K."/>
            <person name="Cook A."/>
            <person name="Corum B."/>
            <person name="Cuomo C.A."/>
            <person name="de Jong P.J."/>
            <person name="DeCaprio D."/>
            <person name="Dewar K."/>
            <person name="FitzGerald M."/>
            <person name="Gilbert J."/>
            <person name="Gibson R."/>
            <person name="Gnerre S."/>
            <person name="Goldstein S."/>
            <person name="Grafham D.V."/>
            <person name="Grocock R."/>
            <person name="Hafez N."/>
            <person name="Hagopian D.S."/>
            <person name="Hart E."/>
            <person name="Norman C.H."/>
            <person name="Humphray S."/>
            <person name="Jaffe D.B."/>
            <person name="Jones M."/>
            <person name="Kamal M."/>
            <person name="Khodiyar V.K."/>
            <person name="LaButti K."/>
            <person name="Laird G."/>
            <person name="Lehoczky J."/>
            <person name="Liu X."/>
            <person name="Lokyitsang T."/>
            <person name="Loveland J."/>
            <person name="Lui A."/>
            <person name="Macdonald P."/>
            <person name="Major J.E."/>
            <person name="Matthews L."/>
            <person name="Mauceli E."/>
            <person name="McCarroll S.A."/>
            <person name="Mihalev A.H."/>
            <person name="Mudge J."/>
            <person name="Nguyen C."/>
            <person name="Nicol R."/>
            <person name="O'Leary S.B."/>
            <person name="Osoegawa K."/>
            <person name="Schwartz D.C."/>
            <person name="Shaw-Smith C."/>
            <person name="Stankiewicz P."/>
            <person name="Steward C."/>
            <person name="Swarbreck D."/>
            <person name="Venkataraman V."/>
            <person name="Whittaker C.A."/>
            <person name="Yang X."/>
            <person name="Zimmer A.R."/>
            <person name="Bradley A."/>
            <person name="Hubbard T."/>
            <person name="Birren B.W."/>
            <person name="Rogers J."/>
            <person name="Lander E.S."/>
            <person name="Nusbaum C."/>
        </authorList>
    </citation>
    <scope>NUCLEOTIDE SEQUENCE [LARGE SCALE GENOMIC DNA]</scope>
</reference>
<reference key="8">
    <citation type="submission" date="2005-07" db="EMBL/GenBank/DDBJ databases">
        <authorList>
            <person name="Mural R.J."/>
            <person name="Istrail S."/>
            <person name="Sutton G.G."/>
            <person name="Florea L."/>
            <person name="Halpern A.L."/>
            <person name="Mobarry C.M."/>
            <person name="Lippert R."/>
            <person name="Walenz B."/>
            <person name="Shatkay H."/>
            <person name="Dew I."/>
            <person name="Miller J.R."/>
            <person name="Flanigan M.J."/>
            <person name="Edwards N.J."/>
            <person name="Bolanos R."/>
            <person name="Fasulo D."/>
            <person name="Halldorsson B.V."/>
            <person name="Hannenhalli S."/>
            <person name="Turner R."/>
            <person name="Yooseph S."/>
            <person name="Lu F."/>
            <person name="Nusskern D.R."/>
            <person name="Shue B.C."/>
            <person name="Zheng X.H."/>
            <person name="Zhong F."/>
            <person name="Delcher A.L."/>
            <person name="Huson D.H."/>
            <person name="Kravitz S.A."/>
            <person name="Mouchard L."/>
            <person name="Reinert K."/>
            <person name="Remington K.A."/>
            <person name="Clark A.G."/>
            <person name="Waterman M.S."/>
            <person name="Eichler E.E."/>
            <person name="Adams M.D."/>
            <person name="Hunkapiller M.W."/>
            <person name="Myers E.W."/>
            <person name="Venter J.C."/>
        </authorList>
    </citation>
    <scope>NUCLEOTIDE SEQUENCE [LARGE SCALE GENOMIC DNA]</scope>
</reference>
<reference key="9">
    <citation type="journal article" date="2004" name="Genome Res.">
        <title>The status, quality, and expansion of the NIH full-length cDNA project: the Mammalian Gene Collection (MGC).</title>
        <authorList>
            <consortium name="The MGC Project Team"/>
        </authorList>
    </citation>
    <scope>NUCLEOTIDE SEQUENCE [LARGE SCALE MRNA] (ISOFORM 1)</scope>
    <source>
        <tissue>Ovary</tissue>
        <tissue>Pancreas</tissue>
    </source>
</reference>
<reference key="10">
    <citation type="journal article" date="2007" name="Science">
        <title>ATM and ATR substrate analysis reveals extensive protein networks responsive to DNA damage.</title>
        <authorList>
            <person name="Matsuoka S."/>
            <person name="Ballif B.A."/>
            <person name="Smogorzewska A."/>
            <person name="McDonald E.R. III"/>
            <person name="Hurov K.E."/>
            <person name="Luo J."/>
            <person name="Bakalarski C.E."/>
            <person name="Zhao Z."/>
            <person name="Solimini N."/>
            <person name="Lerenthal Y."/>
            <person name="Shiloh Y."/>
            <person name="Gygi S.P."/>
            <person name="Elledge S.J."/>
        </authorList>
    </citation>
    <scope>IDENTIFICATION BY MASS SPECTROMETRY [LARGE SCALE ANALYSIS]</scope>
    <source>
        <tissue>Embryonic kidney</tissue>
    </source>
</reference>
<reference key="11">
    <citation type="journal article" date="2010" name="Sci. Signal.">
        <title>Quantitative phosphoproteomics reveals widespread full phosphorylation site occupancy during mitosis.</title>
        <authorList>
            <person name="Olsen J.V."/>
            <person name="Vermeulen M."/>
            <person name="Santamaria A."/>
            <person name="Kumar C."/>
            <person name="Miller M.L."/>
            <person name="Jensen L.J."/>
            <person name="Gnad F."/>
            <person name="Cox J."/>
            <person name="Jensen T.S."/>
            <person name="Nigg E.A."/>
            <person name="Brunak S."/>
            <person name="Mann M."/>
        </authorList>
    </citation>
    <scope>IDENTIFICATION BY MASS SPECTROMETRY [LARGE SCALE ANALYSIS]</scope>
    <source>
        <tissue>Cervix carcinoma</tissue>
    </source>
</reference>
<reference key="12">
    <citation type="journal article" date="2013" name="J. Proteome Res.">
        <title>Toward a comprehensive characterization of a human cancer cell phosphoproteome.</title>
        <authorList>
            <person name="Zhou H."/>
            <person name="Di Palma S."/>
            <person name="Preisinger C."/>
            <person name="Peng M."/>
            <person name="Polat A.N."/>
            <person name="Heck A.J."/>
            <person name="Mohammed S."/>
        </authorList>
    </citation>
    <scope>PHOSPHORYLATION [LARGE SCALE ANALYSIS] AT SER-344; SER-383 AND THR-423</scope>
    <scope>IDENTIFICATION BY MASS SPECTROMETRY [LARGE SCALE ANALYSIS]</scope>
    <source>
        <tissue>Cervix carcinoma</tissue>
        <tissue>Erythroleukemia</tissue>
    </source>
</reference>
<reference key="13">
    <citation type="journal article" date="2014" name="J. Proteomics">
        <title>An enzyme assisted RP-RPLC approach for in-depth analysis of human liver phosphoproteome.</title>
        <authorList>
            <person name="Bian Y."/>
            <person name="Song C."/>
            <person name="Cheng K."/>
            <person name="Dong M."/>
            <person name="Wang F."/>
            <person name="Huang J."/>
            <person name="Sun D."/>
            <person name="Wang L."/>
            <person name="Ye M."/>
            <person name="Zou H."/>
        </authorList>
    </citation>
    <scope>PHOSPHORYLATION [LARGE SCALE ANALYSIS] AT SER-383</scope>
    <scope>IDENTIFICATION BY MASS SPECTROMETRY [LARGE SCALE ANALYSIS]</scope>
    <source>
        <tissue>Liver</tissue>
    </source>
</reference>
<organism>
    <name type="scientific">Homo sapiens</name>
    <name type="common">Human</name>
    <dbReference type="NCBI Taxonomy" id="9606"/>
    <lineage>
        <taxon>Eukaryota</taxon>
        <taxon>Metazoa</taxon>
        <taxon>Chordata</taxon>
        <taxon>Craniata</taxon>
        <taxon>Vertebrata</taxon>
        <taxon>Euteleostomi</taxon>
        <taxon>Mammalia</taxon>
        <taxon>Eutheria</taxon>
        <taxon>Euarchontoglires</taxon>
        <taxon>Primates</taxon>
        <taxon>Haplorrhini</taxon>
        <taxon>Catarrhini</taxon>
        <taxon>Hominidae</taxon>
        <taxon>Homo</taxon>
    </lineage>
</organism>
<sequence length="441" mass="48193">MAIHKALVMCLGLPLFLFPGAWAQGHVPPGCSQGLNPLYYNLCDRSGAWGIVLEAVAGAGIVTTFVLTIILVASLPFVQDTKKRSLLGTQVFFLLGTLGLFCLVFACVVKPDFSTCASRRFLFGVLFAICFSCLAAHVFALNFLARKNHGPRGWVIFTVALLLTLVEVIINTEWLIITLVRGSGEGGPQGNSSAGWAVASPCAIANMDFVMALIYVMLLLLGAFLGAWPALCGRYKRWRKHGVFVLLTTATSVAIWVVWIVMYTYGNKQHNSPTWDDPTLAIALAANAWAFVLFYVIPEVSQVTKSSPEQSYQGDMYPTRGVGYETILKEQKGQSMFVENKAFSMDEPVAAKRPVSPYSGYNGQLLTSVYQPTEMALMHKVPSEGAYDIILPRATANSQVMGSANSTLRAEDMYSAQSHQAATPPKDGKNSQVFRNPYVWD</sequence>
<feature type="signal peptide" evidence="3">
    <location>
        <begin position="1"/>
        <end position="23"/>
    </location>
</feature>
<feature type="chain" id="PRO_0000012967" description="G-protein coupled receptor family C group 5 member C">
    <location>
        <begin position="24"/>
        <end position="441"/>
    </location>
</feature>
<feature type="topological domain" description="Extracellular" evidence="3">
    <location>
        <begin position="24"/>
        <end position="50"/>
    </location>
</feature>
<feature type="transmembrane region" description="Helical; Name=1" evidence="3">
    <location>
        <begin position="51"/>
        <end position="71"/>
    </location>
</feature>
<feature type="topological domain" description="Cytoplasmic" evidence="3">
    <location>
        <begin position="72"/>
        <end position="85"/>
    </location>
</feature>
<feature type="transmembrane region" description="Helical; Name=2" evidence="3">
    <location>
        <begin position="86"/>
        <end position="106"/>
    </location>
</feature>
<feature type="topological domain" description="Extracellular" evidence="3">
    <location>
        <begin position="107"/>
        <end position="120"/>
    </location>
</feature>
<feature type="transmembrane region" description="Helical; Name=3" evidence="3">
    <location>
        <begin position="121"/>
        <end position="141"/>
    </location>
</feature>
<feature type="topological domain" description="Cytoplasmic" evidence="3">
    <location>
        <begin position="142"/>
        <end position="155"/>
    </location>
</feature>
<feature type="transmembrane region" description="Helical; Name=4" evidence="3">
    <location>
        <begin position="156"/>
        <end position="176"/>
    </location>
</feature>
<feature type="topological domain" description="Extracellular" evidence="3">
    <location>
        <begin position="177"/>
        <end position="208"/>
    </location>
</feature>
<feature type="transmembrane region" description="Helical; Name=5" evidence="3">
    <location>
        <begin position="209"/>
        <end position="229"/>
    </location>
</feature>
<feature type="topological domain" description="Cytoplasmic" evidence="3">
    <location>
        <begin position="230"/>
        <end position="241"/>
    </location>
</feature>
<feature type="transmembrane region" description="Helical; Name=6" evidence="3">
    <location>
        <begin position="242"/>
        <end position="262"/>
    </location>
</feature>
<feature type="topological domain" description="Extracellular" evidence="3">
    <location>
        <begin position="263"/>
        <end position="279"/>
    </location>
</feature>
<feature type="transmembrane region" description="Helical; Name=7" evidence="3">
    <location>
        <begin position="280"/>
        <end position="300"/>
    </location>
</feature>
<feature type="topological domain" description="Cytoplasmic" evidence="3">
    <location>
        <begin position="301"/>
        <end position="441"/>
    </location>
</feature>
<feature type="region of interest" description="Disordered" evidence="4">
    <location>
        <begin position="412"/>
        <end position="441"/>
    </location>
</feature>
<feature type="modified residue" description="Phosphoserine" evidence="10">
    <location>
        <position position="344"/>
    </location>
</feature>
<feature type="modified residue" description="Phosphoserine" evidence="10 11">
    <location>
        <position position="383"/>
    </location>
</feature>
<feature type="modified residue" description="Phosphoserine" evidence="2">
    <location>
        <position position="403"/>
    </location>
</feature>
<feature type="modified residue" description="Phosphoserine" evidence="2">
    <location>
        <position position="406"/>
    </location>
</feature>
<feature type="modified residue" description="Phosphotyrosine" evidence="2">
    <location>
        <position position="414"/>
    </location>
</feature>
<feature type="modified residue" description="Phosphothreonine" evidence="10">
    <location>
        <position position="423"/>
    </location>
</feature>
<feature type="glycosylation site" description="N-linked (GlcNAc...) asparagine" evidence="3">
    <location>
        <position position="191"/>
    </location>
</feature>
<feature type="splice variant" id="VSP_037725" description="In isoform 2." evidence="7 8">
    <original>M</original>
    <variation>MGTQPEPGLGARM</variation>
    <location>
        <position position="1"/>
    </location>
</feature>
<feature type="sequence conflict" description="In Ref. 1; CAC00633." evidence="9" ref="1">
    <original>I</original>
    <variation>V</variation>
    <location>
        <position position="204"/>
    </location>
</feature>
<protein>
    <recommendedName>
        <fullName>G-protein coupled receptor family C group 5 member C</fullName>
    </recommendedName>
    <alternativeName>
        <fullName>Retinoic acid-induced gene 3 protein</fullName>
        <shortName>RAIG-3</shortName>
    </alternativeName>
</protein>
<comment type="function">
    <text evidence="1">This retinoic acid-inducible G-protein coupled receptor provide evidence for a possible interaction between retinoid and G-protein signaling pathways.</text>
</comment>
<comment type="subcellular location">
    <subcellularLocation>
        <location>Cell membrane</location>
        <topology>Multi-pass membrane protein</topology>
    </subcellularLocation>
    <subcellularLocation>
        <location>Cytoplasmic vesicle membrane</location>
        <topology>Multi-pass membrane protein</topology>
    </subcellularLocation>
    <text>Localized in the plasma membrane and perinuclear vesicles.</text>
</comment>
<comment type="alternative products">
    <event type="alternative splicing"/>
    <isoform>
        <id>Q9NQ84-1</id>
        <name>1</name>
        <sequence type="displayed"/>
    </isoform>
    <isoform>
        <id>Q9NQ84-2</id>
        <name>2</name>
        <sequence type="described" ref="VSP_037725"/>
    </isoform>
</comment>
<comment type="tissue specificity">
    <text evidence="5 6">Expression is highest in the periphery, particularly in the stomach, but also in the kidney, liver, pancreas, and prostate. In brain, levels of expression are generally lower than in the periphery, with the exception of cerebellum, spinal cord, and dorsal root ganglia (DRG).</text>
</comment>
<comment type="induction">
    <text evidence="5 6">By all-trans retinoic acid (ATRA).</text>
</comment>
<comment type="similarity">
    <text evidence="9">Belongs to the G-protein coupled receptor 3 family.</text>
</comment>
<comment type="sequence caution" evidence="9">
    <conflict type="erroneous initiation">
        <sequence resource="EMBL-CDS" id="AAH16860"/>
    </conflict>
</comment>
<comment type="sequence caution" evidence="9">
    <conflict type="erroneous initiation">
        <sequence resource="EMBL-CDS" id="AAI10849"/>
    </conflict>
</comment>
<comment type="sequence caution" evidence="9">
    <conflict type="erroneous initiation">
        <sequence resource="EMBL-CDS" id="AAI25081"/>
    </conflict>
</comment>
<comment type="sequence caution" evidence="9">
    <conflict type="erroneous initiation">
        <sequence resource="EMBL-CDS" id="AAI25082"/>
    </conflict>
</comment>
<comment type="sequence caution" evidence="9">
    <conflict type="erroneous initiation">
        <sequence resource="EMBL-CDS" id="BAG54752"/>
    </conflict>
</comment>
<comment type="sequence caution" evidence="9">
    <conflict type="erroneous initiation">
        <sequence resource="EMBL-CDS" id="CAC00633"/>
    </conflict>
</comment>
<gene>
    <name type="primary">GPRC5C</name>
    <name type="synonym">RAIG3</name>
    <name type="ORF">PSEC0087</name>
</gene>
<proteinExistence type="evidence at protein level"/>
<evidence type="ECO:0000250" key="1"/>
<evidence type="ECO:0000250" key="2">
    <source>
        <dbReference type="UniProtKB" id="Q8K3J9"/>
    </source>
</evidence>
<evidence type="ECO:0000255" key="3"/>
<evidence type="ECO:0000256" key="4">
    <source>
        <dbReference type="SAM" id="MobiDB-lite"/>
    </source>
</evidence>
<evidence type="ECO:0000269" key="5">
    <source>
    </source>
</evidence>
<evidence type="ECO:0000269" key="6">
    <source>
    </source>
</evidence>
<evidence type="ECO:0000303" key="7">
    <source>
    </source>
</evidence>
<evidence type="ECO:0000303" key="8">
    <source>
    </source>
</evidence>
<evidence type="ECO:0000305" key="9"/>
<evidence type="ECO:0007744" key="10">
    <source>
    </source>
</evidence>
<evidence type="ECO:0007744" key="11">
    <source>
    </source>
</evidence>
<dbReference type="EMBL" id="AJ276102">
    <property type="protein sequence ID" value="CAC00633.1"/>
    <property type="status" value="ALT_INIT"/>
    <property type="molecule type" value="mRNA"/>
</dbReference>
<dbReference type="EMBL" id="AF207989">
    <property type="protein sequence ID" value="AAF72870.1"/>
    <property type="molecule type" value="mRNA"/>
</dbReference>
<dbReference type="EMBL" id="BT007435">
    <property type="protein sequence ID" value="AAP36103.1"/>
    <property type="molecule type" value="mRNA"/>
</dbReference>
<dbReference type="EMBL" id="AK131210">
    <property type="protein sequence ID" value="BAG54752.1"/>
    <property type="status" value="ALT_INIT"/>
    <property type="molecule type" value="mRNA"/>
</dbReference>
<dbReference type="EMBL" id="AK075397">
    <property type="protein sequence ID" value="BAC11595.1"/>
    <property type="molecule type" value="mRNA"/>
</dbReference>
<dbReference type="EMBL" id="AB451470">
    <property type="protein sequence ID" value="BAG70284.1"/>
    <property type="molecule type" value="mRNA"/>
</dbReference>
<dbReference type="EMBL" id="AC079325">
    <property type="status" value="NOT_ANNOTATED_CDS"/>
    <property type="molecule type" value="Genomic_DNA"/>
</dbReference>
<dbReference type="EMBL" id="CH471099">
    <property type="protein sequence ID" value="EAW89163.1"/>
    <property type="molecule type" value="Genomic_DNA"/>
</dbReference>
<dbReference type="EMBL" id="BC016860">
    <property type="protein sequence ID" value="AAH16860.2"/>
    <property type="status" value="ALT_INIT"/>
    <property type="molecule type" value="mRNA"/>
</dbReference>
<dbReference type="EMBL" id="BC110848">
    <property type="protein sequence ID" value="AAI10849.1"/>
    <property type="status" value="ALT_INIT"/>
    <property type="molecule type" value="mRNA"/>
</dbReference>
<dbReference type="EMBL" id="BC125080">
    <property type="protein sequence ID" value="AAI25081.1"/>
    <property type="status" value="ALT_INIT"/>
    <property type="molecule type" value="mRNA"/>
</dbReference>
<dbReference type="EMBL" id="BC125081">
    <property type="protein sequence ID" value="AAI25082.1"/>
    <property type="status" value="ALT_INIT"/>
    <property type="molecule type" value="mRNA"/>
</dbReference>
<dbReference type="CCDS" id="CCDS11699.2">
    <molecule id="Q9NQ84-1"/>
</dbReference>
<dbReference type="RefSeq" id="NP_001353191.1">
    <molecule id="Q9NQ84-1"/>
    <property type="nucleotide sequence ID" value="NM_001366262.2"/>
</dbReference>
<dbReference type="RefSeq" id="NP_061123.3">
    <molecule id="Q9NQ84-1"/>
    <property type="nucleotide sequence ID" value="NM_018653.3"/>
</dbReference>
<dbReference type="RefSeq" id="NP_071319.2">
    <molecule id="Q9NQ84-1"/>
    <property type="nucleotide sequence ID" value="NM_022036.2"/>
</dbReference>
<dbReference type="SMR" id="Q9NQ84"/>
<dbReference type="BioGRID" id="120980">
    <property type="interactions" value="131"/>
</dbReference>
<dbReference type="FunCoup" id="Q9NQ84">
    <property type="interactions" value="98"/>
</dbReference>
<dbReference type="IntAct" id="Q9NQ84">
    <property type="interactions" value="87"/>
</dbReference>
<dbReference type="STRING" id="9606.ENSP00000499092"/>
<dbReference type="ChEMBL" id="CHEMBL4523921"/>
<dbReference type="TCDB" id="9.A.14.11.2">
    <property type="family name" value="the g-protein-coupled receptor (gpcr) family"/>
</dbReference>
<dbReference type="GlyCosmos" id="Q9NQ84">
    <property type="glycosylation" value="1 site, No reported glycans"/>
</dbReference>
<dbReference type="GlyGen" id="Q9NQ84">
    <property type="glycosylation" value="1 site"/>
</dbReference>
<dbReference type="iPTMnet" id="Q9NQ84"/>
<dbReference type="PhosphoSitePlus" id="Q9NQ84"/>
<dbReference type="SwissPalm" id="Q9NQ84"/>
<dbReference type="BioMuta" id="GPRC5C"/>
<dbReference type="DMDM" id="46396014"/>
<dbReference type="jPOST" id="Q9NQ84"/>
<dbReference type="MassIVE" id="Q9NQ84"/>
<dbReference type="PaxDb" id="9606-ENSP00000376403"/>
<dbReference type="PeptideAtlas" id="Q9NQ84"/>
<dbReference type="ProteomicsDB" id="82101">
    <molecule id="Q9NQ84-1"/>
</dbReference>
<dbReference type="ProteomicsDB" id="82102">
    <molecule id="Q9NQ84-2"/>
</dbReference>
<dbReference type="Antibodypedia" id="31968">
    <property type="antibodies" value="230 antibodies from 29 providers"/>
</dbReference>
<dbReference type="DNASU" id="55890"/>
<dbReference type="Ensembl" id="ENST00000392627.7">
    <molecule id="Q9NQ84-1"/>
    <property type="protein sequence ID" value="ENSP00000376403.2"/>
    <property type="gene ID" value="ENSG00000170412.18"/>
</dbReference>
<dbReference type="Ensembl" id="ENST00000392629.3">
    <molecule id="Q9NQ84-1"/>
    <property type="protein sequence ID" value="ENSP00000376405.3"/>
    <property type="gene ID" value="ENSG00000170412.18"/>
</dbReference>
<dbReference type="Ensembl" id="ENST00000652294.1">
    <molecule id="Q9NQ84-2"/>
    <property type="protein sequence ID" value="ENSP00000498839.1"/>
    <property type="gene ID" value="ENSG00000170412.18"/>
</dbReference>
<dbReference type="Ensembl" id="ENST00000709192.1">
    <molecule id="Q9NQ84-1"/>
    <property type="protein sequence ID" value="ENSP00000517544.1"/>
    <property type="gene ID" value="ENSG00000291917.1"/>
</dbReference>
<dbReference type="Ensembl" id="ENST00000709195.1">
    <molecule id="Q9NQ84-1"/>
    <property type="protein sequence ID" value="ENSP00000517547.1"/>
    <property type="gene ID" value="ENSG00000291917.1"/>
</dbReference>
<dbReference type="Ensembl" id="ENST00000709196.1">
    <molecule id="Q9NQ84-2"/>
    <property type="protein sequence ID" value="ENSP00000517548.1"/>
    <property type="gene ID" value="ENSG00000291917.1"/>
</dbReference>
<dbReference type="GeneID" id="55890"/>
<dbReference type="KEGG" id="hsa:55890"/>
<dbReference type="MANE-Select" id="ENST00000392627.7">
    <property type="protein sequence ID" value="ENSP00000376403.2"/>
    <property type="RefSeq nucleotide sequence ID" value="NM_022036.4"/>
    <property type="RefSeq protein sequence ID" value="NP_071319.3"/>
</dbReference>
<dbReference type="UCSC" id="uc002jkp.4">
    <molecule id="Q9NQ84-1"/>
    <property type="organism name" value="human"/>
</dbReference>
<dbReference type="AGR" id="HGNC:13309"/>
<dbReference type="CTD" id="55890"/>
<dbReference type="DisGeNET" id="55890"/>
<dbReference type="GeneCards" id="GPRC5C"/>
<dbReference type="HGNC" id="HGNC:13309">
    <property type="gene designation" value="GPRC5C"/>
</dbReference>
<dbReference type="HPA" id="ENSG00000170412">
    <property type="expression patterns" value="Tissue enhanced (liver, stomach)"/>
</dbReference>
<dbReference type="MIM" id="605949">
    <property type="type" value="gene"/>
</dbReference>
<dbReference type="neXtProt" id="NX_Q9NQ84"/>
<dbReference type="OpenTargets" id="ENSG00000170412"/>
<dbReference type="PharmGKB" id="PA28939"/>
<dbReference type="VEuPathDB" id="HostDB:ENSG00000170412"/>
<dbReference type="eggNOG" id="ENOG502QQEH">
    <property type="taxonomic scope" value="Eukaryota"/>
</dbReference>
<dbReference type="GeneTree" id="ENSGT00950000182961"/>
<dbReference type="HOGENOM" id="CLU_044162_1_1_1"/>
<dbReference type="InParanoid" id="Q9NQ84"/>
<dbReference type="OMA" id="FDMVIPR"/>
<dbReference type="OrthoDB" id="9880600at2759"/>
<dbReference type="PAN-GO" id="Q9NQ84">
    <property type="GO annotations" value="5 GO annotations based on evolutionary models"/>
</dbReference>
<dbReference type="PhylomeDB" id="Q9NQ84"/>
<dbReference type="TreeFam" id="TF321410"/>
<dbReference type="PathwayCommons" id="Q9NQ84"/>
<dbReference type="SignaLink" id="Q9NQ84"/>
<dbReference type="BioGRID-ORCS" id="55890">
    <property type="hits" value="8 hits in 1147 CRISPR screens"/>
</dbReference>
<dbReference type="ChiTaRS" id="GPRC5C">
    <property type="organism name" value="human"/>
</dbReference>
<dbReference type="GenomeRNAi" id="55890"/>
<dbReference type="Pharos" id="Q9NQ84">
    <property type="development level" value="Tbio"/>
</dbReference>
<dbReference type="PRO" id="PR:Q9NQ84"/>
<dbReference type="Proteomes" id="UP000005640">
    <property type="component" value="Chromosome 17"/>
</dbReference>
<dbReference type="RNAct" id="Q9NQ84">
    <property type="molecule type" value="protein"/>
</dbReference>
<dbReference type="Bgee" id="ENSG00000170412">
    <property type="expression patterns" value="Expressed in right lobe of liver and 147 other cell types or tissues"/>
</dbReference>
<dbReference type="ExpressionAtlas" id="Q9NQ84">
    <property type="expression patterns" value="baseline and differential"/>
</dbReference>
<dbReference type="GO" id="GO:0034451">
    <property type="term" value="C:centriolar satellite"/>
    <property type="evidence" value="ECO:0000314"/>
    <property type="project" value="HPA"/>
</dbReference>
<dbReference type="GO" id="GO:0005929">
    <property type="term" value="C:cilium"/>
    <property type="evidence" value="ECO:0000314"/>
    <property type="project" value="HPA"/>
</dbReference>
<dbReference type="GO" id="GO:0030659">
    <property type="term" value="C:cytoplasmic vesicle membrane"/>
    <property type="evidence" value="ECO:0007669"/>
    <property type="project" value="UniProtKB-SubCell"/>
</dbReference>
<dbReference type="GO" id="GO:0070062">
    <property type="term" value="C:extracellular exosome"/>
    <property type="evidence" value="ECO:0007005"/>
    <property type="project" value="UniProtKB"/>
</dbReference>
<dbReference type="GO" id="GO:0043231">
    <property type="term" value="C:intracellular membrane-bounded organelle"/>
    <property type="evidence" value="ECO:0000318"/>
    <property type="project" value="GO_Central"/>
</dbReference>
<dbReference type="GO" id="GO:0005886">
    <property type="term" value="C:plasma membrane"/>
    <property type="evidence" value="ECO:0000314"/>
    <property type="project" value="HPA"/>
</dbReference>
<dbReference type="GO" id="GO:0043235">
    <property type="term" value="C:receptor complex"/>
    <property type="evidence" value="ECO:0000314"/>
    <property type="project" value="MGI"/>
</dbReference>
<dbReference type="GO" id="GO:0031982">
    <property type="term" value="C:vesicle"/>
    <property type="evidence" value="ECO:0007005"/>
    <property type="project" value="UniProtKB"/>
</dbReference>
<dbReference type="GO" id="GO:0004930">
    <property type="term" value="F:G protein-coupled receptor activity"/>
    <property type="evidence" value="ECO:0000304"/>
    <property type="project" value="ProtInc"/>
</dbReference>
<dbReference type="GO" id="GO:0030295">
    <property type="term" value="F:protein kinase activator activity"/>
    <property type="evidence" value="ECO:0000318"/>
    <property type="project" value="GO_Central"/>
</dbReference>
<dbReference type="GO" id="GO:0007186">
    <property type="term" value="P:G protein-coupled receptor signaling pathway"/>
    <property type="evidence" value="ECO:0000304"/>
    <property type="project" value="ProtInc"/>
</dbReference>
<dbReference type="CDD" id="cd15277">
    <property type="entry name" value="7tmC_RAIG3_GPRC5C"/>
    <property type="match status" value="1"/>
</dbReference>
<dbReference type="InterPro" id="IPR017978">
    <property type="entry name" value="GPCR_3_C"/>
</dbReference>
<dbReference type="InterPro" id="IPR051753">
    <property type="entry name" value="RA-inducible_GPCR3"/>
</dbReference>
<dbReference type="PANTHER" id="PTHR14511">
    <property type="entry name" value="G PROTEIN COUPLED RECEPTOR, CLASS C, GROUP 5"/>
    <property type="match status" value="1"/>
</dbReference>
<dbReference type="PANTHER" id="PTHR14511:SF15">
    <property type="entry name" value="G-PROTEIN COUPLED RECEPTOR FAMILY C GROUP 5 MEMBER C"/>
    <property type="match status" value="1"/>
</dbReference>
<dbReference type="Pfam" id="PF00003">
    <property type="entry name" value="7tm_3"/>
    <property type="match status" value="1"/>
</dbReference>
<dbReference type="PROSITE" id="PS50259">
    <property type="entry name" value="G_PROTEIN_RECEP_F3_4"/>
    <property type="match status" value="1"/>
</dbReference>
<keyword id="KW-0025">Alternative splicing</keyword>
<keyword id="KW-1003">Cell membrane</keyword>
<keyword id="KW-0968">Cytoplasmic vesicle</keyword>
<keyword id="KW-0297">G-protein coupled receptor</keyword>
<keyword id="KW-0325">Glycoprotein</keyword>
<keyword id="KW-0472">Membrane</keyword>
<keyword id="KW-0597">Phosphoprotein</keyword>
<keyword id="KW-1267">Proteomics identification</keyword>
<keyword id="KW-0675">Receptor</keyword>
<keyword id="KW-1185">Reference proteome</keyword>
<keyword id="KW-0732">Signal</keyword>
<keyword id="KW-0807">Transducer</keyword>
<keyword id="KW-0812">Transmembrane</keyword>
<keyword id="KW-1133">Transmembrane helix</keyword>